<proteinExistence type="inferred from homology"/>
<organism>
    <name type="scientific">Mycobacterium tuberculosis (strain CDC 1551 / Oshkosh)</name>
    <dbReference type="NCBI Taxonomy" id="83331"/>
    <lineage>
        <taxon>Bacteria</taxon>
        <taxon>Bacillati</taxon>
        <taxon>Actinomycetota</taxon>
        <taxon>Actinomycetes</taxon>
        <taxon>Mycobacteriales</taxon>
        <taxon>Mycobacteriaceae</taxon>
        <taxon>Mycobacterium</taxon>
        <taxon>Mycobacterium tuberculosis complex</taxon>
    </lineage>
</organism>
<comment type="subunit">
    <text evidence="1">Forms a complex with EsxP.</text>
</comment>
<comment type="subcellular location">
    <subcellularLocation>
        <location evidence="1">Secreted</location>
    </subcellularLocation>
    <text evidence="1">Probably secreted via the ESX-5 / type VII secretion system (T7SS).</text>
</comment>
<comment type="similarity">
    <text evidence="2">Belongs to the WXG100 family. ESAT-6 subfamily.</text>
</comment>
<gene>
    <name evidence="1" type="primary">esxO</name>
    <name type="ordered locus">MT2411</name>
</gene>
<dbReference type="EMBL" id="AE000516">
    <property type="protein sequence ID" value="AAK46704.1"/>
    <property type="molecule type" value="Genomic_DNA"/>
</dbReference>
<dbReference type="PIR" id="C70662">
    <property type="entry name" value="C70662"/>
</dbReference>
<dbReference type="RefSeq" id="WP_003899283.1">
    <property type="nucleotide sequence ID" value="NZ_KK341227.1"/>
</dbReference>
<dbReference type="SMR" id="P9WNI6"/>
<dbReference type="KEGG" id="mtc:MT2411"/>
<dbReference type="PATRIC" id="fig|83331.31.peg.2599"/>
<dbReference type="HOGENOM" id="CLU_192559_0_0_11"/>
<dbReference type="Proteomes" id="UP000001020">
    <property type="component" value="Chromosome"/>
</dbReference>
<dbReference type="GO" id="GO:0005576">
    <property type="term" value="C:extracellular region"/>
    <property type="evidence" value="ECO:0007669"/>
    <property type="project" value="UniProtKB-SubCell"/>
</dbReference>
<dbReference type="FunFam" id="1.10.287.1060:FF:000004">
    <property type="entry name" value="ESAT-6-like protein EsxI"/>
    <property type="match status" value="1"/>
</dbReference>
<dbReference type="Gene3D" id="1.10.287.1060">
    <property type="entry name" value="ESAT-6-like"/>
    <property type="match status" value="1"/>
</dbReference>
<dbReference type="InterPro" id="IPR009416">
    <property type="entry name" value="ESAT-6-like_Myco"/>
</dbReference>
<dbReference type="InterPro" id="IPR036689">
    <property type="entry name" value="ESAT-6-like_sf"/>
</dbReference>
<dbReference type="InterPro" id="IPR010310">
    <property type="entry name" value="T7SS_ESAT-6-like"/>
</dbReference>
<dbReference type="Pfam" id="PF06013">
    <property type="entry name" value="WXG100"/>
    <property type="match status" value="1"/>
</dbReference>
<dbReference type="PIRSF" id="PIRSF037656">
    <property type="entry name" value="DUF1066"/>
    <property type="match status" value="1"/>
</dbReference>
<dbReference type="SUPFAM" id="SSF140453">
    <property type="entry name" value="EsxAB dimer-like"/>
    <property type="match status" value="1"/>
</dbReference>
<name>ESXO_MYCTO</name>
<protein>
    <recommendedName>
        <fullName evidence="1">ESAT-6-like protein EsxO</fullName>
    </recommendedName>
</protein>
<accession>P9WNI6</accession>
<accession>L0T9C9</accession>
<accession>P95242</accession>
<reference key="1">
    <citation type="journal article" date="2002" name="J. Bacteriol.">
        <title>Whole-genome comparison of Mycobacterium tuberculosis clinical and laboratory strains.</title>
        <authorList>
            <person name="Fleischmann R.D."/>
            <person name="Alland D."/>
            <person name="Eisen J.A."/>
            <person name="Carpenter L."/>
            <person name="White O."/>
            <person name="Peterson J.D."/>
            <person name="DeBoy R.T."/>
            <person name="Dodson R.J."/>
            <person name="Gwinn M.L."/>
            <person name="Haft D.H."/>
            <person name="Hickey E.K."/>
            <person name="Kolonay J.F."/>
            <person name="Nelson W.C."/>
            <person name="Umayam L.A."/>
            <person name="Ermolaeva M.D."/>
            <person name="Salzberg S.L."/>
            <person name="Delcher A."/>
            <person name="Utterback T.R."/>
            <person name="Weidman J.F."/>
            <person name="Khouri H.M."/>
            <person name="Gill J."/>
            <person name="Mikula A."/>
            <person name="Bishai W."/>
            <person name="Jacobs W.R. Jr."/>
            <person name="Venter J.C."/>
            <person name="Fraser C.M."/>
        </authorList>
    </citation>
    <scope>NUCLEOTIDE SEQUENCE [LARGE SCALE GENOMIC DNA]</scope>
    <source>
        <strain>CDC 1551 / Oshkosh</strain>
    </source>
</reference>
<keyword id="KW-1185">Reference proteome</keyword>
<keyword id="KW-0964">Secreted</keyword>
<evidence type="ECO:0000250" key="1">
    <source>
        <dbReference type="UniProtKB" id="P9WNI7"/>
    </source>
</evidence>
<evidence type="ECO:0000305" key="2"/>
<sequence>MTINYQFGDVDAHGAMIRAQAGLLEAEHQAIVRDVLAAGDFWGGAGSVACQEFITQLGRNFQVIYEQANAHGQKVQAAGNNMAQTDSAVGSSWA</sequence>
<feature type="chain" id="PRO_0000427120" description="ESAT-6-like protein EsxO">
    <location>
        <begin position="1"/>
        <end position="94"/>
    </location>
</feature>